<proteinExistence type="inferred from homology"/>
<accession>Q3K2D6</accession>
<reference key="1">
    <citation type="journal article" date="2005" name="Proc. Natl. Acad. Sci. U.S.A.">
        <title>Genome analysis of multiple pathogenic isolates of Streptococcus agalactiae: implications for the microbial 'pan-genome'.</title>
        <authorList>
            <person name="Tettelin H."/>
            <person name="Masignani V."/>
            <person name="Cieslewicz M.J."/>
            <person name="Donati C."/>
            <person name="Medini D."/>
            <person name="Ward N.L."/>
            <person name="Angiuoli S.V."/>
            <person name="Crabtree J."/>
            <person name="Jones A.L."/>
            <person name="Durkin A.S."/>
            <person name="DeBoy R.T."/>
            <person name="Davidsen T.M."/>
            <person name="Mora M."/>
            <person name="Scarselli M."/>
            <person name="Margarit y Ros I."/>
            <person name="Peterson J.D."/>
            <person name="Hauser C.R."/>
            <person name="Sundaram J.P."/>
            <person name="Nelson W.C."/>
            <person name="Madupu R."/>
            <person name="Brinkac L.M."/>
            <person name="Dodson R.J."/>
            <person name="Rosovitz M.J."/>
            <person name="Sullivan S.A."/>
            <person name="Daugherty S.C."/>
            <person name="Haft D.H."/>
            <person name="Selengut J."/>
            <person name="Gwinn M.L."/>
            <person name="Zhou L."/>
            <person name="Zafar N."/>
            <person name="Khouri H."/>
            <person name="Radune D."/>
            <person name="Dimitrov G."/>
            <person name="Watkins K."/>
            <person name="O'Connor K.J."/>
            <person name="Smith S."/>
            <person name="Utterback T.R."/>
            <person name="White O."/>
            <person name="Rubens C.E."/>
            <person name="Grandi G."/>
            <person name="Madoff L.C."/>
            <person name="Kasper D.L."/>
            <person name="Telford J.L."/>
            <person name="Wessels M.R."/>
            <person name="Rappuoli R."/>
            <person name="Fraser C.M."/>
        </authorList>
    </citation>
    <scope>NUCLEOTIDE SEQUENCE [LARGE SCALE GENOMIC DNA]</scope>
    <source>
        <strain>ATCC 27591 / A909 / CDC SS700</strain>
    </source>
</reference>
<protein>
    <recommendedName>
        <fullName evidence="1">Large ribosomal subunit protein bL31B</fullName>
    </recommendedName>
    <alternativeName>
        <fullName evidence="2">50S ribosomal protein L31 type B</fullName>
    </alternativeName>
</protein>
<keyword id="KW-0687">Ribonucleoprotein</keyword>
<keyword id="KW-0689">Ribosomal protein</keyword>
<evidence type="ECO:0000255" key="1">
    <source>
        <dbReference type="HAMAP-Rule" id="MF_00502"/>
    </source>
</evidence>
<evidence type="ECO:0000305" key="2"/>
<comment type="subunit">
    <text evidence="1">Part of the 50S ribosomal subunit.</text>
</comment>
<comment type="similarity">
    <text evidence="1">Belongs to the bacterial ribosomal protein bL31 family. Type B subfamily.</text>
</comment>
<name>RL31B_STRA1</name>
<dbReference type="EMBL" id="CP000114">
    <property type="protein sequence ID" value="ABA44542.1"/>
    <property type="molecule type" value="Genomic_DNA"/>
</dbReference>
<dbReference type="RefSeq" id="WP_000710758.1">
    <property type="nucleotide sequence ID" value="NC_007432.1"/>
</dbReference>
<dbReference type="SMR" id="Q3K2D6"/>
<dbReference type="KEGG" id="sak:SAK_0686"/>
<dbReference type="HOGENOM" id="CLU_114306_2_1_9"/>
<dbReference type="GO" id="GO:1990904">
    <property type="term" value="C:ribonucleoprotein complex"/>
    <property type="evidence" value="ECO:0007669"/>
    <property type="project" value="UniProtKB-KW"/>
</dbReference>
<dbReference type="GO" id="GO:0005840">
    <property type="term" value="C:ribosome"/>
    <property type="evidence" value="ECO:0007669"/>
    <property type="project" value="UniProtKB-KW"/>
</dbReference>
<dbReference type="GO" id="GO:0003735">
    <property type="term" value="F:structural constituent of ribosome"/>
    <property type="evidence" value="ECO:0007669"/>
    <property type="project" value="InterPro"/>
</dbReference>
<dbReference type="GO" id="GO:0006412">
    <property type="term" value="P:translation"/>
    <property type="evidence" value="ECO:0007669"/>
    <property type="project" value="UniProtKB-UniRule"/>
</dbReference>
<dbReference type="Gene3D" id="4.10.830.30">
    <property type="entry name" value="Ribosomal protein L31"/>
    <property type="match status" value="1"/>
</dbReference>
<dbReference type="HAMAP" id="MF_00502">
    <property type="entry name" value="Ribosomal_bL31_2"/>
    <property type="match status" value="1"/>
</dbReference>
<dbReference type="InterPro" id="IPR034704">
    <property type="entry name" value="Ribosomal_bL28/bL31-like_sf"/>
</dbReference>
<dbReference type="InterPro" id="IPR002150">
    <property type="entry name" value="Ribosomal_bL31"/>
</dbReference>
<dbReference type="InterPro" id="IPR027493">
    <property type="entry name" value="Ribosomal_bL31_B"/>
</dbReference>
<dbReference type="InterPro" id="IPR042105">
    <property type="entry name" value="Ribosomal_bL31_sf"/>
</dbReference>
<dbReference type="NCBIfam" id="TIGR00105">
    <property type="entry name" value="L31"/>
    <property type="match status" value="1"/>
</dbReference>
<dbReference type="NCBIfam" id="NF002462">
    <property type="entry name" value="PRK01678.1"/>
    <property type="match status" value="1"/>
</dbReference>
<dbReference type="PANTHER" id="PTHR33280">
    <property type="entry name" value="50S RIBOSOMAL PROTEIN L31, CHLOROPLASTIC"/>
    <property type="match status" value="1"/>
</dbReference>
<dbReference type="PANTHER" id="PTHR33280:SF1">
    <property type="entry name" value="LARGE RIBOSOMAL SUBUNIT PROTEIN BL31C"/>
    <property type="match status" value="1"/>
</dbReference>
<dbReference type="Pfam" id="PF01197">
    <property type="entry name" value="Ribosomal_L31"/>
    <property type="match status" value="1"/>
</dbReference>
<dbReference type="PRINTS" id="PR01249">
    <property type="entry name" value="RIBOSOMALL31"/>
</dbReference>
<dbReference type="SUPFAM" id="SSF143800">
    <property type="entry name" value="L28p-like"/>
    <property type="match status" value="1"/>
</dbReference>
<dbReference type="PROSITE" id="PS01143">
    <property type="entry name" value="RIBOSOMAL_L31"/>
    <property type="match status" value="1"/>
</dbReference>
<feature type="chain" id="PRO_0000259125" description="Large ribosomal subunit protein bL31B">
    <location>
        <begin position="1"/>
        <end position="86"/>
    </location>
</feature>
<organism>
    <name type="scientific">Streptococcus agalactiae serotype Ia (strain ATCC 27591 / A909 / CDC SS700)</name>
    <dbReference type="NCBI Taxonomy" id="205921"/>
    <lineage>
        <taxon>Bacteria</taxon>
        <taxon>Bacillati</taxon>
        <taxon>Bacillota</taxon>
        <taxon>Bacilli</taxon>
        <taxon>Lactobacillales</taxon>
        <taxon>Streptococcaceae</taxon>
        <taxon>Streptococcus</taxon>
    </lineage>
</organism>
<sequence>MKKDIHPDYRPVVFLDTTTGYKFLSGSTKSTKETVEFEGETYPLIRVEISSDSHPFYTGRQKFTQADGRVDRFNKKYGLKDANTAQ</sequence>
<gene>
    <name evidence="1" type="primary">rpmE2</name>
    <name type="ordered locus">SAK_0686</name>
</gene>